<reference key="1">
    <citation type="journal article" date="2009" name="PLoS Biol.">
        <title>Lineage-specific biology revealed by a finished genome assembly of the mouse.</title>
        <authorList>
            <person name="Church D.M."/>
            <person name="Goodstadt L."/>
            <person name="Hillier L.W."/>
            <person name="Zody M.C."/>
            <person name="Goldstein S."/>
            <person name="She X."/>
            <person name="Bult C.J."/>
            <person name="Agarwala R."/>
            <person name="Cherry J.L."/>
            <person name="DiCuccio M."/>
            <person name="Hlavina W."/>
            <person name="Kapustin Y."/>
            <person name="Meric P."/>
            <person name="Maglott D."/>
            <person name="Birtle Z."/>
            <person name="Marques A.C."/>
            <person name="Graves T."/>
            <person name="Zhou S."/>
            <person name="Teague B."/>
            <person name="Potamousis K."/>
            <person name="Churas C."/>
            <person name="Place M."/>
            <person name="Herschleb J."/>
            <person name="Runnheim R."/>
            <person name="Forrest D."/>
            <person name="Amos-Landgraf J."/>
            <person name="Schwartz D.C."/>
            <person name="Cheng Z."/>
            <person name="Lindblad-Toh K."/>
            <person name="Eichler E.E."/>
            <person name="Ponting C.P."/>
        </authorList>
    </citation>
    <scope>NUCLEOTIDE SEQUENCE [LARGE SCALE GENOMIC DNA]</scope>
    <source>
        <strain>C57BL/6J</strain>
    </source>
</reference>
<reference key="2">
    <citation type="journal article" date="2004" name="Genome Res.">
        <title>The status, quality, and expansion of the NIH full-length cDNA project: the Mammalian Gene Collection (MGC).</title>
        <authorList>
            <consortium name="The MGC Project Team"/>
        </authorList>
    </citation>
    <scope>NUCLEOTIDE SEQUENCE [LARGE SCALE MRNA] (ISOFORM 1)</scope>
    <scope>NUCLEOTIDE SEQUENCE [LARGE SCALE MRNA] OF 11-385 (ISOFORM 2)</scope>
    <source>
        <tissue>Brain</tissue>
    </source>
</reference>
<reference key="3">
    <citation type="journal article" date="2004" name="Gene Expr. Patterns">
        <title>Eki2 is upregulated specifically in the testis during mouse sex determination.</title>
        <authorList>
            <person name="Hurley T.M."/>
            <person name="McClive P.J."/>
            <person name="Sarraj M.A."/>
            <person name="Sinclair A.H."/>
        </authorList>
    </citation>
    <scope>NUCLEOTIDE SEQUENCE [MRNA] OF 74-385 (ISOFORM 1)</scope>
    <scope>TISSUE SPECIFICITY</scope>
    <scope>DEVELOPMENTAL STAGE</scope>
    <source>
        <strain>C3H X 101</strain>
    </source>
</reference>
<reference key="4">
    <citation type="journal article" date="2006" name="J. Biol. Chem.">
        <title>Placental thrombosis and spontaneous fetal death in mice deficient in ethanolamine kinase 2.</title>
        <authorList>
            <person name="Tian Y."/>
            <person name="Jackson P."/>
            <person name="Gunter C."/>
            <person name="Wang J."/>
            <person name="Rock C.O."/>
            <person name="Jackowski S."/>
        </authorList>
    </citation>
    <scope>FUNCTION</scope>
    <scope>TISSUE SPECIFICITY</scope>
    <scope>CATALYTIC ACTIVITY</scope>
    <scope>DISRUPTION PHENOTYPE</scope>
</reference>
<reference key="5">
    <citation type="journal article" date="2008" name="Endocrinology">
        <title>Testis development, fertility, and survival in ethanolamine kinase 2-deficient mice.</title>
        <authorList>
            <person name="Gustin S.E."/>
            <person name="Western P.S."/>
            <person name="McClive P.J."/>
            <person name="Harley V.R."/>
            <person name="Koopman P.A."/>
            <person name="Sinclair A.H."/>
        </authorList>
    </citation>
    <scope>TISSUE SPECIFICITY</scope>
    <scope>DISRUPTION PHENOTYPE</scope>
</reference>
<reference key="6">
    <citation type="journal article" date="2010" name="Cell">
        <title>A tissue-specific atlas of mouse protein phosphorylation and expression.</title>
        <authorList>
            <person name="Huttlin E.L."/>
            <person name="Jedrychowski M.P."/>
            <person name="Elias J.E."/>
            <person name="Goswami T."/>
            <person name="Rad R."/>
            <person name="Beausoleil S.A."/>
            <person name="Villen J."/>
            <person name="Haas W."/>
            <person name="Sowa M.E."/>
            <person name="Gygi S.P."/>
        </authorList>
    </citation>
    <scope>IDENTIFICATION BY MASS SPECTROMETRY [LARGE SCALE ANALYSIS]</scope>
    <source>
        <tissue>Testis</tissue>
    </source>
</reference>
<sequence length="385" mass="44567">MAVPPSAPVPCSPFYLRRQEPCPQCSWSMEEKAVASAGCWEPPGPPRAAVPCFSVTVEQDDILPGALRLIRELRPHWKPEQVRTKRFKDGITNKLLACYVEEDMRDCVLVRVYGERTELLVDRENEVRNFQLLRAHGCAPKLYCTFQNGLCYEYVQGVALGPEHIREPQLFRLIALEMAKIHTIHANGSLPKPTLWHKMHRYFTLVKDEISPSLSADVPKVEVLEQELAWLKEHLSQLDSPVVFCHNDLLCKNIIYDSDKGRVCFIDYEYAGYNYQAFDIGNHFNEFAGVNVVDYSRYPARETQVQWLRYYLEAQKGTAASPREVERLYAQVNKFALASHFFWALWALIQNQYSTISFDFLRYAVIRFNQYFKVKPQVSALEMPK</sequence>
<proteinExistence type="evidence at protein level"/>
<accession>A7MCT6</accession>
<accession>B7ZNN6</accession>
<accession>D3Z771</accession>
<accession>Q6XRG2</accession>
<organism>
    <name type="scientific">Mus musculus</name>
    <name type="common">Mouse</name>
    <dbReference type="NCBI Taxonomy" id="10090"/>
    <lineage>
        <taxon>Eukaryota</taxon>
        <taxon>Metazoa</taxon>
        <taxon>Chordata</taxon>
        <taxon>Craniata</taxon>
        <taxon>Vertebrata</taxon>
        <taxon>Euteleostomi</taxon>
        <taxon>Mammalia</taxon>
        <taxon>Eutheria</taxon>
        <taxon>Euarchontoglires</taxon>
        <taxon>Glires</taxon>
        <taxon>Rodentia</taxon>
        <taxon>Myomorpha</taxon>
        <taxon>Muroidea</taxon>
        <taxon>Muridae</taxon>
        <taxon>Murinae</taxon>
        <taxon>Mus</taxon>
        <taxon>Mus</taxon>
    </lineage>
</organism>
<feature type="chain" id="PRO_0000393962" description="Ethanolamine kinase 2">
    <location>
        <begin position="1"/>
        <end position="385"/>
    </location>
</feature>
<feature type="splice variant" id="VSP_039099" description="In isoform 2." evidence="4">
    <original>VNVVDYSRYPARETQVQWLRYYLEAQKGTAASPREVERLYAQVNKFALASHFFWALWALIQNQYSTISFDFLRYAVIRFNQYFKVKPQVSALEMPK</original>
    <variation>RGGLL</variation>
    <location>
        <begin position="290"/>
        <end position="385"/>
    </location>
</feature>
<feature type="sequence conflict" description="In Ref. 3; AAP47267." evidence="5" ref="3">
    <original>R</original>
    <variation>Q</variation>
    <location>
        <position position="166"/>
    </location>
</feature>
<feature type="sequence conflict" description="In Ref. 3; AAP47267." evidence="5" ref="3">
    <original>V</original>
    <variation>E</variation>
    <location>
        <position position="292"/>
    </location>
</feature>
<feature type="sequence conflict" description="In Ref. 3; AAP47267." evidence="5" ref="3">
    <original>A</original>
    <variation>S</variation>
    <location>
        <position position="336"/>
    </location>
</feature>
<evidence type="ECO:0000269" key="1">
    <source>
    </source>
</evidence>
<evidence type="ECO:0000269" key="2">
    <source>
    </source>
</evidence>
<evidence type="ECO:0000269" key="3">
    <source>
    </source>
</evidence>
<evidence type="ECO:0000303" key="4">
    <source>
    </source>
</evidence>
<evidence type="ECO:0000305" key="5"/>
<gene>
    <name type="primary">Etnk2</name>
    <name type="synonym">Tuc1</name>
</gene>
<keyword id="KW-0025">Alternative splicing</keyword>
<keyword id="KW-0067">ATP-binding</keyword>
<keyword id="KW-0418">Kinase</keyword>
<keyword id="KW-0444">Lipid biosynthesis</keyword>
<keyword id="KW-0443">Lipid metabolism</keyword>
<keyword id="KW-0547">Nucleotide-binding</keyword>
<keyword id="KW-0594">Phospholipid biosynthesis</keyword>
<keyword id="KW-1208">Phospholipid metabolism</keyword>
<keyword id="KW-1185">Reference proteome</keyword>
<keyword id="KW-0808">Transferase</keyword>
<dbReference type="EC" id="2.7.1.82"/>
<dbReference type="EMBL" id="AC068906">
    <property type="status" value="NOT_ANNOTATED_CDS"/>
    <property type="molecule type" value="Genomic_DNA"/>
</dbReference>
<dbReference type="EMBL" id="BC145351">
    <property type="protein sequence ID" value="AAI45352.1"/>
    <property type="molecule type" value="mRNA"/>
</dbReference>
<dbReference type="EMBL" id="BC152310">
    <property type="protein sequence ID" value="AAI52311.1"/>
    <property type="molecule type" value="mRNA"/>
</dbReference>
<dbReference type="EMBL" id="AY212244">
    <property type="protein sequence ID" value="AAP47267.1"/>
    <property type="molecule type" value="mRNA"/>
</dbReference>
<dbReference type="CCDS" id="CCDS15296.2">
    <molecule id="A7MCT6-1"/>
</dbReference>
<dbReference type="RefSeq" id="NP_780652.2">
    <molecule id="A7MCT6-1"/>
    <property type="nucleotide sequence ID" value="NM_175443.6"/>
</dbReference>
<dbReference type="SMR" id="A7MCT6"/>
<dbReference type="FunCoup" id="A7MCT6">
    <property type="interactions" value="1013"/>
</dbReference>
<dbReference type="STRING" id="10090.ENSMUSP00000114272"/>
<dbReference type="iPTMnet" id="A7MCT6"/>
<dbReference type="PhosphoSitePlus" id="A7MCT6"/>
<dbReference type="SwissPalm" id="A7MCT6"/>
<dbReference type="jPOST" id="A7MCT6"/>
<dbReference type="PaxDb" id="10090-ENSMUSP00000114272"/>
<dbReference type="ProteomicsDB" id="277850">
    <molecule id="A7MCT6-1"/>
</dbReference>
<dbReference type="ProteomicsDB" id="277851">
    <molecule id="A7MCT6-2"/>
</dbReference>
<dbReference type="Antibodypedia" id="34553">
    <property type="antibodies" value="164 antibodies from 25 providers"/>
</dbReference>
<dbReference type="DNASU" id="214253"/>
<dbReference type="Ensembl" id="ENSMUST00000135222.9">
    <molecule id="A7MCT6-1"/>
    <property type="protein sequence ID" value="ENSMUSP00000114272.3"/>
    <property type="gene ID" value="ENSMUSG00000070644.14"/>
</dbReference>
<dbReference type="GeneID" id="214253"/>
<dbReference type="KEGG" id="mmu:214253"/>
<dbReference type="UCSC" id="uc007cqg.2">
    <molecule id="A7MCT6-1"/>
    <property type="organism name" value="mouse"/>
</dbReference>
<dbReference type="UCSC" id="uc011wsa.2">
    <molecule id="A7MCT6-2"/>
    <property type="organism name" value="mouse"/>
</dbReference>
<dbReference type="AGR" id="MGI:2443760"/>
<dbReference type="CTD" id="55224"/>
<dbReference type="MGI" id="MGI:2443760">
    <property type="gene designation" value="Etnk2"/>
</dbReference>
<dbReference type="VEuPathDB" id="HostDB:ENSMUSG00000070644"/>
<dbReference type="eggNOG" id="KOG4720">
    <property type="taxonomic scope" value="Eukaryota"/>
</dbReference>
<dbReference type="GeneTree" id="ENSGT00950000182939"/>
<dbReference type="InParanoid" id="A7MCT6"/>
<dbReference type="OMA" id="PMIWTKT"/>
<dbReference type="OrthoDB" id="10267235at2759"/>
<dbReference type="PhylomeDB" id="A7MCT6"/>
<dbReference type="TreeFam" id="TF313549"/>
<dbReference type="BRENDA" id="2.7.1.82">
    <property type="organism ID" value="3474"/>
</dbReference>
<dbReference type="Reactome" id="R-MMU-1483213">
    <property type="pathway name" value="Synthesis of PE"/>
</dbReference>
<dbReference type="UniPathway" id="UPA00558">
    <property type="reaction ID" value="UER00741"/>
</dbReference>
<dbReference type="BioGRID-ORCS" id="214253">
    <property type="hits" value="10 hits in 76 CRISPR screens"/>
</dbReference>
<dbReference type="PRO" id="PR:A7MCT6"/>
<dbReference type="Proteomes" id="UP000000589">
    <property type="component" value="Chromosome 1"/>
</dbReference>
<dbReference type="RNAct" id="A7MCT6">
    <property type="molecule type" value="protein"/>
</dbReference>
<dbReference type="Bgee" id="ENSMUSG00000070644">
    <property type="expression patterns" value="Expressed in left lobe of liver and 69 other cell types or tissues"/>
</dbReference>
<dbReference type="ExpressionAtlas" id="A7MCT6">
    <property type="expression patterns" value="baseline and differential"/>
</dbReference>
<dbReference type="GO" id="GO:0005524">
    <property type="term" value="F:ATP binding"/>
    <property type="evidence" value="ECO:0007669"/>
    <property type="project" value="UniProtKB-KW"/>
</dbReference>
<dbReference type="GO" id="GO:0004305">
    <property type="term" value="F:ethanolamine kinase activity"/>
    <property type="evidence" value="ECO:0000314"/>
    <property type="project" value="UniProtKB"/>
</dbReference>
<dbReference type="GO" id="GO:0001701">
    <property type="term" value="P:in utero embryonic development"/>
    <property type="evidence" value="ECO:0000315"/>
    <property type="project" value="MGI"/>
</dbReference>
<dbReference type="GO" id="GO:0035264">
    <property type="term" value="P:multicellular organism growth"/>
    <property type="evidence" value="ECO:0000315"/>
    <property type="project" value="MGI"/>
</dbReference>
<dbReference type="GO" id="GO:0006646">
    <property type="term" value="P:phosphatidylethanolamine biosynthetic process"/>
    <property type="evidence" value="ECO:0000315"/>
    <property type="project" value="MGI"/>
</dbReference>
<dbReference type="GO" id="GO:0016310">
    <property type="term" value="P:phosphorylation"/>
    <property type="evidence" value="ECO:0000314"/>
    <property type="project" value="UniProtKB"/>
</dbReference>
<dbReference type="GO" id="GO:0001890">
    <property type="term" value="P:placenta development"/>
    <property type="evidence" value="ECO:0000315"/>
    <property type="project" value="MGI"/>
</dbReference>
<dbReference type="GO" id="GO:0009791">
    <property type="term" value="P:post-embryonic development"/>
    <property type="evidence" value="ECO:0000315"/>
    <property type="project" value="MGI"/>
</dbReference>
<dbReference type="CDD" id="cd05157">
    <property type="entry name" value="ETNK_euk"/>
    <property type="match status" value="1"/>
</dbReference>
<dbReference type="FunFam" id="3.90.1200.10:FF:000002">
    <property type="entry name" value="Ethanolamine kinase 1"/>
    <property type="match status" value="1"/>
</dbReference>
<dbReference type="Gene3D" id="3.90.1200.10">
    <property type="match status" value="1"/>
</dbReference>
<dbReference type="Gene3D" id="3.30.200.20">
    <property type="entry name" value="Phosphorylase Kinase, domain 1"/>
    <property type="match status" value="1"/>
</dbReference>
<dbReference type="InterPro" id="IPR011009">
    <property type="entry name" value="Kinase-like_dom_sf"/>
</dbReference>
<dbReference type="PANTHER" id="PTHR22603">
    <property type="entry name" value="CHOLINE/ETHANOALAMINE KINASE"/>
    <property type="match status" value="1"/>
</dbReference>
<dbReference type="PANTHER" id="PTHR22603:SF94">
    <property type="entry name" value="ETHANOLAMINE KINASE 2"/>
    <property type="match status" value="1"/>
</dbReference>
<dbReference type="Pfam" id="PF01633">
    <property type="entry name" value="Choline_kinase"/>
    <property type="match status" value="1"/>
</dbReference>
<dbReference type="SUPFAM" id="SSF56112">
    <property type="entry name" value="Protein kinase-like (PK-like)"/>
    <property type="match status" value="1"/>
</dbReference>
<name>EKI2_MOUSE</name>
<comment type="function">
    <text evidence="2">Highly specific for ethanolamine phosphorylation. Does not have choline kinase activity.</text>
</comment>
<comment type="catalytic activity">
    <reaction evidence="2">
        <text>ethanolamine + ATP = phosphoethanolamine + ADP + H(+)</text>
        <dbReference type="Rhea" id="RHEA:13069"/>
        <dbReference type="ChEBI" id="CHEBI:15378"/>
        <dbReference type="ChEBI" id="CHEBI:30616"/>
        <dbReference type="ChEBI" id="CHEBI:57603"/>
        <dbReference type="ChEBI" id="CHEBI:58190"/>
        <dbReference type="ChEBI" id="CHEBI:456216"/>
        <dbReference type="EC" id="2.7.1.82"/>
    </reaction>
</comment>
<comment type="pathway">
    <text>Phospholipid metabolism; phosphatidylethanolamine biosynthesis; phosphatidylethanolamine from ethanolamine: step 1/3.</text>
</comment>
<comment type="alternative products">
    <event type="alternative splicing"/>
    <isoform>
        <id>A7MCT6-1</id>
        <name>1</name>
        <sequence type="displayed"/>
    </isoform>
    <isoform>
        <id>A7MCT6-2</id>
        <name>2</name>
        <sequence type="described" ref="VSP_039099"/>
    </isoform>
</comment>
<comment type="tissue specificity">
    <text evidence="1 2 3">Expressed in testis and liver. Low expression in ovary and kidney.</text>
</comment>
<comment type="developmental stage">
    <text evidence="1">The expression is restricted to the gonads during the sex determination period and throughout embryogenesis. In developing testis, the expression is found only in the Sertoli cells. The expression is strongest at day 11.5, more intense in the testis than the ovary. From 12.5 dpc the expression in the ovary is reduced and disappears. The expression at day 13.5 dpc is restricted to the testis cords.</text>
</comment>
<comment type="disruption phenotype">
    <text evidence="2 3">No visible phenotype in adults. No significant effect is seen on liver phospholipid metabolism, neural development, or testicular function. No abnormalities are detected in embryonic and adult testis morphology, differentiation, function, or fertility. PubMed:16861741 shows maternal-specific failure to support late embryonic development, resulting in reduced perinatal size and survival and suggesting compromised placental function.</text>
</comment>
<comment type="similarity">
    <text evidence="5">Belongs to the choline/ethanolamine kinase family.</text>
</comment>
<comment type="caution">
    <text evidence="5">According to PubMed:16861741, disruption of the gene causes increased prevalence of placental thrombosis, reduced litter size and increased pup mortality. No such effect was observed by PubMed:18755794. One possible explanation lies in the fact that PubMed:16861741 observed a remarkable 100% survival of control pups and 16% mortality for mutant pups, while PubMed:18755794 observed 16% mortality for both wild-type and mutant pups. According to PubMed:18755794, the construct used in PubMed:16861741 may lead to expression of a truncated transcript that might have deleterious effects.</text>
</comment>
<protein>
    <recommendedName>
        <fullName>Ethanolamine kinase 2</fullName>
        <shortName>EKI 2</shortName>
        <ecNumber>2.7.1.82</ecNumber>
    </recommendedName>
    <alternativeName>
        <fullName>Ethanolamine kinase-like protein</fullName>
    </alternativeName>
</protein>